<protein>
    <recommendedName>
        <fullName evidence="2">NAD(P)H-quinone oxidoreductase chain 4, chloroplastic</fullName>
        <ecNumber evidence="2">7.1.1.-</ecNumber>
    </recommendedName>
    <alternativeName>
        <fullName evidence="2">NAD(P)H dehydrogenase, chain 4</fullName>
    </alternativeName>
    <alternativeName>
        <fullName evidence="2">NADH-plastoquinone oxidoreductase chain 4</fullName>
    </alternativeName>
</protein>
<geneLocation type="chloroplast"/>
<feature type="chain" id="PRO_0000343300" description="NAD(P)H-quinone oxidoreductase chain 4, chloroplastic">
    <location>
        <begin position="1"/>
        <end position="500"/>
    </location>
</feature>
<feature type="transmembrane region" description="Helical" evidence="2">
    <location>
        <begin position="4"/>
        <end position="24"/>
    </location>
</feature>
<feature type="transmembrane region" description="Helical" evidence="2">
    <location>
        <begin position="35"/>
        <end position="55"/>
    </location>
</feature>
<feature type="transmembrane region" description="Helical" evidence="2">
    <location>
        <begin position="87"/>
        <end position="107"/>
    </location>
</feature>
<feature type="transmembrane region" description="Helical" evidence="2">
    <location>
        <begin position="113"/>
        <end position="130"/>
    </location>
</feature>
<feature type="transmembrane region" description="Helical" evidence="2">
    <location>
        <begin position="134"/>
        <end position="154"/>
    </location>
</feature>
<feature type="transmembrane region" description="Helical" evidence="2">
    <location>
        <begin position="167"/>
        <end position="187"/>
    </location>
</feature>
<feature type="transmembrane region" description="Helical" evidence="2">
    <location>
        <begin position="211"/>
        <end position="231"/>
    </location>
</feature>
<feature type="transmembrane region" description="Helical" evidence="2">
    <location>
        <begin position="242"/>
        <end position="262"/>
    </location>
</feature>
<feature type="transmembrane region" description="Helical" evidence="2">
    <location>
        <begin position="272"/>
        <end position="292"/>
    </location>
</feature>
<feature type="transmembrane region" description="Helical" evidence="2">
    <location>
        <begin position="305"/>
        <end position="325"/>
    </location>
</feature>
<feature type="transmembrane region" description="Helical" evidence="2">
    <location>
        <begin position="330"/>
        <end position="350"/>
    </location>
</feature>
<feature type="transmembrane region" description="Helical" evidence="2">
    <location>
        <begin position="386"/>
        <end position="406"/>
    </location>
</feature>
<feature type="transmembrane region" description="Helical" evidence="2">
    <location>
        <begin position="416"/>
        <end position="436"/>
    </location>
</feature>
<feature type="transmembrane region" description="Helical" evidence="2">
    <location>
        <begin position="462"/>
        <end position="482"/>
    </location>
</feature>
<keyword id="KW-0150">Chloroplast</keyword>
<keyword id="KW-0472">Membrane</keyword>
<keyword id="KW-0520">NAD</keyword>
<keyword id="KW-0521">NADP</keyword>
<keyword id="KW-0934">Plastid</keyword>
<keyword id="KW-0618">Plastoquinone</keyword>
<keyword id="KW-0874">Quinone</keyword>
<keyword id="KW-0691">RNA editing</keyword>
<keyword id="KW-0793">Thylakoid</keyword>
<keyword id="KW-1278">Translocase</keyword>
<keyword id="KW-0812">Transmembrane</keyword>
<keyword id="KW-1133">Transmembrane helix</keyword>
<proteinExistence type="inferred from homology"/>
<dbReference type="EC" id="7.1.1.-" evidence="2"/>
<dbReference type="EMBL" id="AP009368">
    <property type="protein sequence ID" value="BAF49990.1"/>
    <property type="status" value="ALT_SEQ"/>
    <property type="molecule type" value="Genomic_DNA"/>
</dbReference>
<dbReference type="RefSeq" id="YP_001123165.1">
    <property type="nucleotide sequence ID" value="NC_009267.1"/>
</dbReference>
<dbReference type="SMR" id="A4QJY2"/>
<dbReference type="GeneID" id="4962440"/>
<dbReference type="GO" id="GO:0009535">
    <property type="term" value="C:chloroplast thylakoid membrane"/>
    <property type="evidence" value="ECO:0007669"/>
    <property type="project" value="UniProtKB-SubCell"/>
</dbReference>
<dbReference type="GO" id="GO:0008137">
    <property type="term" value="F:NADH dehydrogenase (ubiquinone) activity"/>
    <property type="evidence" value="ECO:0007669"/>
    <property type="project" value="InterPro"/>
</dbReference>
<dbReference type="GO" id="GO:0048039">
    <property type="term" value="F:ubiquinone binding"/>
    <property type="evidence" value="ECO:0007669"/>
    <property type="project" value="TreeGrafter"/>
</dbReference>
<dbReference type="GO" id="GO:0042773">
    <property type="term" value="P:ATP synthesis coupled electron transport"/>
    <property type="evidence" value="ECO:0007669"/>
    <property type="project" value="InterPro"/>
</dbReference>
<dbReference type="GO" id="GO:0015990">
    <property type="term" value="P:electron transport coupled proton transport"/>
    <property type="evidence" value="ECO:0007669"/>
    <property type="project" value="TreeGrafter"/>
</dbReference>
<dbReference type="HAMAP" id="MF_00491">
    <property type="entry name" value="NDH1_NuoM"/>
    <property type="match status" value="1"/>
</dbReference>
<dbReference type="InterPro" id="IPR022997">
    <property type="entry name" value="NADH_Q_OxRdtase_chain4"/>
</dbReference>
<dbReference type="InterPro" id="IPR010227">
    <property type="entry name" value="NADH_Q_OxRdtase_chainM/4"/>
</dbReference>
<dbReference type="InterPro" id="IPR003918">
    <property type="entry name" value="NADH_UbQ_OxRdtase"/>
</dbReference>
<dbReference type="InterPro" id="IPR001750">
    <property type="entry name" value="ND/Mrp_TM"/>
</dbReference>
<dbReference type="NCBIfam" id="TIGR01972">
    <property type="entry name" value="NDH_I_M"/>
    <property type="match status" value="1"/>
</dbReference>
<dbReference type="PANTHER" id="PTHR43507:SF21">
    <property type="entry name" value="NAD(P)H-QUINONE OXIDOREDUCTASE CHAIN 4, CHLOROPLASTIC"/>
    <property type="match status" value="1"/>
</dbReference>
<dbReference type="PANTHER" id="PTHR43507">
    <property type="entry name" value="NADH-UBIQUINONE OXIDOREDUCTASE CHAIN 4"/>
    <property type="match status" value="1"/>
</dbReference>
<dbReference type="Pfam" id="PF00361">
    <property type="entry name" value="Proton_antipo_M"/>
    <property type="match status" value="1"/>
</dbReference>
<dbReference type="PRINTS" id="PR01437">
    <property type="entry name" value="NUOXDRDTASE4"/>
</dbReference>
<name>NU4C_OLIPU</name>
<accession>A4QJY2</accession>
<reference key="1">
    <citation type="submission" date="2007-03" db="EMBL/GenBank/DDBJ databases">
        <title>Sequence analysis of Arabidopsis pumila JS2 chloroplast DNA.</title>
        <authorList>
            <person name="Hosouchi T."/>
            <person name="Tsuruoka H."/>
            <person name="Kotani H."/>
        </authorList>
    </citation>
    <scope>NUCLEOTIDE SEQUENCE [LARGE SCALE GENOMIC DNA]</scope>
</reference>
<gene>
    <name evidence="2" type="primary">ndhD</name>
</gene>
<sequence>MNDFPWLTIIVVFPISAGSLMLFLPHRGNKVNKWYTICICILELLLTTYAFCYNFKMDDPLIQLSEDYKWINFFDFYWRMGIDGLSIGTILLTGFITTLATLAAFPVTRDSRLFHFLMLAMYSGQIGSFSSRDLLLFFIMWELELIPVYLLLSMWGGKKRLYSATKFILYTAGSSIFLLIGVLGISLYGSNEPTLNLELLANQSYPVTLEILFYIAFLIAFAVKSPIIPLHTWLPDTHGEAHYSTCMLLAGILLKMGAYGLVRINMELLPHAHSMFSPWLMVVGTIQIIYAASTSPGQRNLKKRIAYSSVSHMGFIIIGISSITDPGLNGAILQIISHGFIGAALFFLAGTSYDRIRLVYLDEMGGMAISIPKIFTMFTILSMASLALPGMSGFVAELIVFFGIITSQKYFLISKILIIFVMAIGMILTPIYLLSMSRQMFYGYKLINVKNFSFFDSGPRELFLSISILLPIIGIGIYPDFVLSLASDKVESILSNYFYG</sequence>
<organism>
    <name type="scientific">Olimarabidopsis pumila</name>
    <name type="common">Dwarf rocket</name>
    <name type="synonym">Arabidopsis griffithiana</name>
    <dbReference type="NCBI Taxonomy" id="74718"/>
    <lineage>
        <taxon>Eukaryota</taxon>
        <taxon>Viridiplantae</taxon>
        <taxon>Streptophyta</taxon>
        <taxon>Embryophyta</taxon>
        <taxon>Tracheophyta</taxon>
        <taxon>Spermatophyta</taxon>
        <taxon>Magnoliopsida</taxon>
        <taxon>eudicotyledons</taxon>
        <taxon>Gunneridae</taxon>
        <taxon>Pentapetalae</taxon>
        <taxon>rosids</taxon>
        <taxon>malvids</taxon>
        <taxon>Brassicales</taxon>
        <taxon>Brassicaceae</taxon>
        <taxon>Alyssopsideae</taxon>
        <taxon>Olimarabidopsis</taxon>
    </lineage>
</organism>
<evidence type="ECO:0000250" key="1"/>
<evidence type="ECO:0000255" key="2">
    <source>
        <dbReference type="HAMAP-Rule" id="MF_00491"/>
    </source>
</evidence>
<comment type="catalytic activity">
    <reaction evidence="2">
        <text>a plastoquinone + NADH + (n+1) H(+)(in) = a plastoquinol + NAD(+) + n H(+)(out)</text>
        <dbReference type="Rhea" id="RHEA:42608"/>
        <dbReference type="Rhea" id="RHEA-COMP:9561"/>
        <dbReference type="Rhea" id="RHEA-COMP:9562"/>
        <dbReference type="ChEBI" id="CHEBI:15378"/>
        <dbReference type="ChEBI" id="CHEBI:17757"/>
        <dbReference type="ChEBI" id="CHEBI:57540"/>
        <dbReference type="ChEBI" id="CHEBI:57945"/>
        <dbReference type="ChEBI" id="CHEBI:62192"/>
    </reaction>
</comment>
<comment type="catalytic activity">
    <reaction evidence="2">
        <text>a plastoquinone + NADPH + (n+1) H(+)(in) = a plastoquinol + NADP(+) + n H(+)(out)</text>
        <dbReference type="Rhea" id="RHEA:42612"/>
        <dbReference type="Rhea" id="RHEA-COMP:9561"/>
        <dbReference type="Rhea" id="RHEA-COMP:9562"/>
        <dbReference type="ChEBI" id="CHEBI:15378"/>
        <dbReference type="ChEBI" id="CHEBI:17757"/>
        <dbReference type="ChEBI" id="CHEBI:57783"/>
        <dbReference type="ChEBI" id="CHEBI:58349"/>
        <dbReference type="ChEBI" id="CHEBI:62192"/>
    </reaction>
</comment>
<comment type="subcellular location">
    <subcellularLocation>
        <location evidence="2">Plastid</location>
        <location evidence="2">Chloroplast thylakoid membrane</location>
        <topology evidence="2">Multi-pass membrane protein</topology>
    </subcellularLocation>
</comment>
<comment type="RNA editing">
    <location>
        <position position="1" evidence="1"/>
    </location>
    <text evidence="1">The initiator methionine is created by RNA editing.</text>
</comment>
<comment type="similarity">
    <text evidence="2">Belongs to the complex I subunit 4 family.</text>
</comment>